<gene>
    <name evidence="1" type="primary">rpsQ</name>
    <name type="ordered locus">BQ08140</name>
</gene>
<dbReference type="EMBL" id="BX897700">
    <property type="protein sequence ID" value="CAF26297.1"/>
    <property type="molecule type" value="Genomic_DNA"/>
</dbReference>
<dbReference type="RefSeq" id="WP_011179543.1">
    <property type="nucleotide sequence ID" value="NC_005955.1"/>
</dbReference>
<dbReference type="SMR" id="Q6FZD1"/>
<dbReference type="KEGG" id="bqu:BQ08140"/>
<dbReference type="eggNOG" id="COG0186">
    <property type="taxonomic scope" value="Bacteria"/>
</dbReference>
<dbReference type="HOGENOM" id="CLU_073626_1_1_5"/>
<dbReference type="OrthoDB" id="9811714at2"/>
<dbReference type="Proteomes" id="UP000000597">
    <property type="component" value="Chromosome"/>
</dbReference>
<dbReference type="GO" id="GO:0022627">
    <property type="term" value="C:cytosolic small ribosomal subunit"/>
    <property type="evidence" value="ECO:0007669"/>
    <property type="project" value="TreeGrafter"/>
</dbReference>
<dbReference type="GO" id="GO:0019843">
    <property type="term" value="F:rRNA binding"/>
    <property type="evidence" value="ECO:0007669"/>
    <property type="project" value="UniProtKB-UniRule"/>
</dbReference>
<dbReference type="GO" id="GO:0003735">
    <property type="term" value="F:structural constituent of ribosome"/>
    <property type="evidence" value="ECO:0007669"/>
    <property type="project" value="InterPro"/>
</dbReference>
<dbReference type="GO" id="GO:0006412">
    <property type="term" value="P:translation"/>
    <property type="evidence" value="ECO:0007669"/>
    <property type="project" value="UniProtKB-UniRule"/>
</dbReference>
<dbReference type="CDD" id="cd00364">
    <property type="entry name" value="Ribosomal_uS17"/>
    <property type="match status" value="1"/>
</dbReference>
<dbReference type="Gene3D" id="2.40.50.140">
    <property type="entry name" value="Nucleic acid-binding proteins"/>
    <property type="match status" value="1"/>
</dbReference>
<dbReference type="HAMAP" id="MF_01345_B">
    <property type="entry name" value="Ribosomal_uS17_B"/>
    <property type="match status" value="1"/>
</dbReference>
<dbReference type="InterPro" id="IPR012340">
    <property type="entry name" value="NA-bd_OB-fold"/>
</dbReference>
<dbReference type="InterPro" id="IPR000266">
    <property type="entry name" value="Ribosomal_uS17"/>
</dbReference>
<dbReference type="InterPro" id="IPR019984">
    <property type="entry name" value="Ribosomal_uS17_bact/chlr"/>
</dbReference>
<dbReference type="InterPro" id="IPR019979">
    <property type="entry name" value="Ribosomal_uS17_CS"/>
</dbReference>
<dbReference type="NCBIfam" id="NF004123">
    <property type="entry name" value="PRK05610.1"/>
    <property type="match status" value="1"/>
</dbReference>
<dbReference type="NCBIfam" id="TIGR03635">
    <property type="entry name" value="uS17_bact"/>
    <property type="match status" value="1"/>
</dbReference>
<dbReference type="PANTHER" id="PTHR10744">
    <property type="entry name" value="40S RIBOSOMAL PROTEIN S11 FAMILY MEMBER"/>
    <property type="match status" value="1"/>
</dbReference>
<dbReference type="PANTHER" id="PTHR10744:SF1">
    <property type="entry name" value="SMALL RIBOSOMAL SUBUNIT PROTEIN US17M"/>
    <property type="match status" value="1"/>
</dbReference>
<dbReference type="Pfam" id="PF00366">
    <property type="entry name" value="Ribosomal_S17"/>
    <property type="match status" value="1"/>
</dbReference>
<dbReference type="PRINTS" id="PR00973">
    <property type="entry name" value="RIBOSOMALS17"/>
</dbReference>
<dbReference type="SUPFAM" id="SSF50249">
    <property type="entry name" value="Nucleic acid-binding proteins"/>
    <property type="match status" value="1"/>
</dbReference>
<dbReference type="PROSITE" id="PS00056">
    <property type="entry name" value="RIBOSOMAL_S17"/>
    <property type="match status" value="1"/>
</dbReference>
<keyword id="KW-0687">Ribonucleoprotein</keyword>
<keyword id="KW-0689">Ribosomal protein</keyword>
<keyword id="KW-0694">RNA-binding</keyword>
<keyword id="KW-0699">rRNA-binding</keyword>
<sequence>MPKRILQGVVVSDKSDKTVVVKVERRYSHPLLKKTVRQSKKYKAHDENNQFKIGDQISIQESKPISKDKRWIVVKDSVA</sequence>
<feature type="chain" id="PRO_0000233430" description="Small ribosomal subunit protein uS17">
    <location>
        <begin position="1"/>
        <end position="79"/>
    </location>
</feature>
<evidence type="ECO:0000255" key="1">
    <source>
        <dbReference type="HAMAP-Rule" id="MF_01345"/>
    </source>
</evidence>
<evidence type="ECO:0000305" key="2"/>
<name>RS17_BARQU</name>
<accession>Q6FZD1</accession>
<comment type="function">
    <text evidence="1">One of the primary rRNA binding proteins, it binds specifically to the 5'-end of 16S ribosomal RNA.</text>
</comment>
<comment type="subunit">
    <text evidence="1">Part of the 30S ribosomal subunit.</text>
</comment>
<comment type="similarity">
    <text evidence="1">Belongs to the universal ribosomal protein uS17 family.</text>
</comment>
<protein>
    <recommendedName>
        <fullName evidence="1">Small ribosomal subunit protein uS17</fullName>
    </recommendedName>
    <alternativeName>
        <fullName evidence="2">30S ribosomal protein S17</fullName>
    </alternativeName>
</protein>
<organism>
    <name type="scientific">Bartonella quintana (strain Toulouse)</name>
    <name type="common">Rochalimaea quintana</name>
    <dbReference type="NCBI Taxonomy" id="283165"/>
    <lineage>
        <taxon>Bacteria</taxon>
        <taxon>Pseudomonadati</taxon>
        <taxon>Pseudomonadota</taxon>
        <taxon>Alphaproteobacteria</taxon>
        <taxon>Hyphomicrobiales</taxon>
        <taxon>Bartonellaceae</taxon>
        <taxon>Bartonella</taxon>
    </lineage>
</organism>
<proteinExistence type="inferred from homology"/>
<reference key="1">
    <citation type="journal article" date="2004" name="Proc. Natl. Acad. Sci. U.S.A.">
        <title>The louse-borne human pathogen Bartonella quintana is a genomic derivative of the zoonotic agent Bartonella henselae.</title>
        <authorList>
            <person name="Alsmark U.C.M."/>
            <person name="Frank A.C."/>
            <person name="Karlberg E.O."/>
            <person name="Legault B.-A."/>
            <person name="Ardell D.H."/>
            <person name="Canbaeck B."/>
            <person name="Eriksson A.-S."/>
            <person name="Naeslund A.K."/>
            <person name="Handley S.A."/>
            <person name="Huvet M."/>
            <person name="La Scola B."/>
            <person name="Holmberg M."/>
            <person name="Andersson S.G.E."/>
        </authorList>
    </citation>
    <scope>NUCLEOTIDE SEQUENCE [LARGE SCALE GENOMIC DNA]</scope>
    <source>
        <strain>Toulouse</strain>
    </source>
</reference>